<evidence type="ECO:0000255" key="1">
    <source>
        <dbReference type="HAMAP-Rule" id="MF_01333"/>
    </source>
</evidence>
<evidence type="ECO:0000305" key="2"/>
<sequence length="185" mass="21036">MAEATYTPKLRTFYDEVVRPKMIEQFGYKNPMEVPTIDKIVINMGVGEATADTKKVTTAAADLAQIAGQKPVITRARKAISNFKLRENQPVGAKVTLRKARMYEFMDRLVSIALPRVRDFRGLNPKSFDGRGNYAMGVKEHIVFPEINYDRVEQIWGMDIIVCTTAKTDEEARALLKAFNFPFRQ</sequence>
<dbReference type="EMBL" id="CP000781">
    <property type="protein sequence ID" value="ABS70004.1"/>
    <property type="molecule type" value="Genomic_DNA"/>
</dbReference>
<dbReference type="SMR" id="A7IPQ8"/>
<dbReference type="STRING" id="78245.Xaut_4786"/>
<dbReference type="KEGG" id="xau:Xaut_4786"/>
<dbReference type="eggNOG" id="COG0094">
    <property type="taxonomic scope" value="Bacteria"/>
</dbReference>
<dbReference type="HOGENOM" id="CLU_061015_2_1_5"/>
<dbReference type="OrthoDB" id="9806626at2"/>
<dbReference type="PhylomeDB" id="A7IPQ8"/>
<dbReference type="Proteomes" id="UP000002417">
    <property type="component" value="Chromosome"/>
</dbReference>
<dbReference type="GO" id="GO:1990904">
    <property type="term" value="C:ribonucleoprotein complex"/>
    <property type="evidence" value="ECO:0007669"/>
    <property type="project" value="UniProtKB-KW"/>
</dbReference>
<dbReference type="GO" id="GO:0005840">
    <property type="term" value="C:ribosome"/>
    <property type="evidence" value="ECO:0007669"/>
    <property type="project" value="UniProtKB-KW"/>
</dbReference>
<dbReference type="GO" id="GO:0019843">
    <property type="term" value="F:rRNA binding"/>
    <property type="evidence" value="ECO:0007669"/>
    <property type="project" value="UniProtKB-UniRule"/>
</dbReference>
<dbReference type="GO" id="GO:0003735">
    <property type="term" value="F:structural constituent of ribosome"/>
    <property type="evidence" value="ECO:0007669"/>
    <property type="project" value="InterPro"/>
</dbReference>
<dbReference type="GO" id="GO:0000049">
    <property type="term" value="F:tRNA binding"/>
    <property type="evidence" value="ECO:0007669"/>
    <property type="project" value="UniProtKB-UniRule"/>
</dbReference>
<dbReference type="GO" id="GO:0006412">
    <property type="term" value="P:translation"/>
    <property type="evidence" value="ECO:0007669"/>
    <property type="project" value="UniProtKB-UniRule"/>
</dbReference>
<dbReference type="FunFam" id="3.30.1440.10:FF:000001">
    <property type="entry name" value="50S ribosomal protein L5"/>
    <property type="match status" value="1"/>
</dbReference>
<dbReference type="Gene3D" id="3.30.1440.10">
    <property type="match status" value="1"/>
</dbReference>
<dbReference type="HAMAP" id="MF_01333_B">
    <property type="entry name" value="Ribosomal_uL5_B"/>
    <property type="match status" value="1"/>
</dbReference>
<dbReference type="InterPro" id="IPR002132">
    <property type="entry name" value="Ribosomal_uL5"/>
</dbReference>
<dbReference type="InterPro" id="IPR020930">
    <property type="entry name" value="Ribosomal_uL5_bac-type"/>
</dbReference>
<dbReference type="InterPro" id="IPR031309">
    <property type="entry name" value="Ribosomal_uL5_C"/>
</dbReference>
<dbReference type="InterPro" id="IPR020929">
    <property type="entry name" value="Ribosomal_uL5_CS"/>
</dbReference>
<dbReference type="InterPro" id="IPR022803">
    <property type="entry name" value="Ribosomal_uL5_dom_sf"/>
</dbReference>
<dbReference type="InterPro" id="IPR031310">
    <property type="entry name" value="Ribosomal_uL5_N"/>
</dbReference>
<dbReference type="NCBIfam" id="NF000585">
    <property type="entry name" value="PRK00010.1"/>
    <property type="match status" value="1"/>
</dbReference>
<dbReference type="PANTHER" id="PTHR11994">
    <property type="entry name" value="60S RIBOSOMAL PROTEIN L11-RELATED"/>
    <property type="match status" value="1"/>
</dbReference>
<dbReference type="Pfam" id="PF00281">
    <property type="entry name" value="Ribosomal_L5"/>
    <property type="match status" value="1"/>
</dbReference>
<dbReference type="Pfam" id="PF00673">
    <property type="entry name" value="Ribosomal_L5_C"/>
    <property type="match status" value="1"/>
</dbReference>
<dbReference type="PIRSF" id="PIRSF002161">
    <property type="entry name" value="Ribosomal_L5"/>
    <property type="match status" value="1"/>
</dbReference>
<dbReference type="SUPFAM" id="SSF55282">
    <property type="entry name" value="RL5-like"/>
    <property type="match status" value="1"/>
</dbReference>
<dbReference type="PROSITE" id="PS00358">
    <property type="entry name" value="RIBOSOMAL_L5"/>
    <property type="match status" value="1"/>
</dbReference>
<feature type="chain" id="PRO_1000142475" description="Large ribosomal subunit protein uL5">
    <location>
        <begin position="1"/>
        <end position="185"/>
    </location>
</feature>
<accession>A7IPQ8</accession>
<protein>
    <recommendedName>
        <fullName evidence="1">Large ribosomal subunit protein uL5</fullName>
    </recommendedName>
    <alternativeName>
        <fullName evidence="2">50S ribosomal protein L5</fullName>
    </alternativeName>
</protein>
<organism>
    <name type="scientific">Xanthobacter autotrophicus (strain ATCC BAA-1158 / Py2)</name>
    <dbReference type="NCBI Taxonomy" id="78245"/>
    <lineage>
        <taxon>Bacteria</taxon>
        <taxon>Pseudomonadati</taxon>
        <taxon>Pseudomonadota</taxon>
        <taxon>Alphaproteobacteria</taxon>
        <taxon>Hyphomicrobiales</taxon>
        <taxon>Xanthobacteraceae</taxon>
        <taxon>Xanthobacter</taxon>
    </lineage>
</organism>
<gene>
    <name evidence="1" type="primary">rplE</name>
    <name type="ordered locus">Xaut_4786</name>
</gene>
<proteinExistence type="inferred from homology"/>
<keyword id="KW-1185">Reference proteome</keyword>
<keyword id="KW-0687">Ribonucleoprotein</keyword>
<keyword id="KW-0689">Ribosomal protein</keyword>
<keyword id="KW-0694">RNA-binding</keyword>
<keyword id="KW-0699">rRNA-binding</keyword>
<keyword id="KW-0820">tRNA-binding</keyword>
<comment type="function">
    <text evidence="1">This is one of the proteins that bind and probably mediate the attachment of the 5S RNA into the large ribosomal subunit, where it forms part of the central protuberance. In the 70S ribosome it contacts protein S13 of the 30S subunit (bridge B1b), connecting the 2 subunits; this bridge is implicated in subunit movement. Contacts the P site tRNA; the 5S rRNA and some of its associated proteins might help stabilize positioning of ribosome-bound tRNAs.</text>
</comment>
<comment type="subunit">
    <text evidence="1">Part of the 50S ribosomal subunit; part of the 5S rRNA/L5/L18/L25 subcomplex. Contacts the 5S rRNA and the P site tRNA. Forms a bridge to the 30S subunit in the 70S ribosome.</text>
</comment>
<comment type="similarity">
    <text evidence="1">Belongs to the universal ribosomal protein uL5 family.</text>
</comment>
<reference key="1">
    <citation type="submission" date="2007-07" db="EMBL/GenBank/DDBJ databases">
        <title>Complete sequence of chromosome of Xanthobacter autotrophicus Py2.</title>
        <authorList>
            <consortium name="US DOE Joint Genome Institute"/>
            <person name="Copeland A."/>
            <person name="Lucas S."/>
            <person name="Lapidus A."/>
            <person name="Barry K."/>
            <person name="Glavina del Rio T."/>
            <person name="Hammon N."/>
            <person name="Israni S."/>
            <person name="Dalin E."/>
            <person name="Tice H."/>
            <person name="Pitluck S."/>
            <person name="Sims D."/>
            <person name="Brettin T."/>
            <person name="Bruce D."/>
            <person name="Detter J.C."/>
            <person name="Han C."/>
            <person name="Tapia R."/>
            <person name="Brainard J."/>
            <person name="Schmutz J."/>
            <person name="Larimer F."/>
            <person name="Land M."/>
            <person name="Hauser L."/>
            <person name="Kyrpides N."/>
            <person name="Kim E."/>
            <person name="Ensigns S.A."/>
            <person name="Richardson P."/>
        </authorList>
    </citation>
    <scope>NUCLEOTIDE SEQUENCE [LARGE SCALE GENOMIC DNA]</scope>
    <source>
        <strain>ATCC BAA-1158 / Py2</strain>
    </source>
</reference>
<name>RL5_XANP2</name>